<comment type="function">
    <text evidence="1">Forms part of the ribosomal stalk, playing a central role in the interaction of the ribosome with GTP-bound translation factors.</text>
</comment>
<comment type="subunit">
    <text evidence="1">Part of the ribosomal stalk of the 50S ribosomal subunit. The N-terminus interacts with L11 and the large rRNA to form the base of the stalk. The C-terminus forms an elongated spine to which L12 dimers bind in a sequential fashion forming a multimeric L10(L12)X complex (By similarity).</text>
</comment>
<comment type="similarity">
    <text evidence="2">Belongs to the universal ribosomal protein uL10 family.</text>
</comment>
<keyword id="KW-1185">Reference proteome</keyword>
<keyword id="KW-0687">Ribonucleoprotein</keyword>
<keyword id="KW-0689">Ribosomal protein</keyword>
<keyword id="KW-0694">RNA-binding</keyword>
<keyword id="KW-0699">rRNA-binding</keyword>
<name>RL10_CAUVC</name>
<accession>P58060</accession>
<proteinExistence type="inferred from homology"/>
<feature type="chain" id="PRO_0000154609" description="Large ribosomal subunit protein uL10">
    <location>
        <begin position="1"/>
        <end position="172"/>
    </location>
</feature>
<dbReference type="EMBL" id="AE005673">
    <property type="protein sequence ID" value="AAK22483.1"/>
    <property type="molecule type" value="Genomic_DNA"/>
</dbReference>
<dbReference type="PIR" id="G87310">
    <property type="entry name" value="G87310"/>
</dbReference>
<dbReference type="RefSeq" id="NP_419315.1">
    <property type="nucleotide sequence ID" value="NC_002696.2"/>
</dbReference>
<dbReference type="RefSeq" id="WP_010918384.1">
    <property type="nucleotide sequence ID" value="NC_002696.2"/>
</dbReference>
<dbReference type="SMR" id="P58060"/>
<dbReference type="STRING" id="190650.CC_0496"/>
<dbReference type="EnsemblBacteria" id="AAK22483">
    <property type="protein sequence ID" value="AAK22483"/>
    <property type="gene ID" value="CC_0496"/>
</dbReference>
<dbReference type="KEGG" id="ccr:CC_0496"/>
<dbReference type="PATRIC" id="fig|190650.5.peg.505"/>
<dbReference type="eggNOG" id="COG0244">
    <property type="taxonomic scope" value="Bacteria"/>
</dbReference>
<dbReference type="HOGENOM" id="CLU_092227_0_0_5"/>
<dbReference type="BioCyc" id="CAULO:CC0496-MONOMER"/>
<dbReference type="Proteomes" id="UP000001816">
    <property type="component" value="Chromosome"/>
</dbReference>
<dbReference type="GO" id="GO:0015934">
    <property type="term" value="C:large ribosomal subunit"/>
    <property type="evidence" value="ECO:0007669"/>
    <property type="project" value="InterPro"/>
</dbReference>
<dbReference type="GO" id="GO:0070180">
    <property type="term" value="F:large ribosomal subunit rRNA binding"/>
    <property type="evidence" value="ECO:0007669"/>
    <property type="project" value="UniProtKB-UniRule"/>
</dbReference>
<dbReference type="GO" id="GO:0003735">
    <property type="term" value="F:structural constituent of ribosome"/>
    <property type="evidence" value="ECO:0007669"/>
    <property type="project" value="InterPro"/>
</dbReference>
<dbReference type="GO" id="GO:0006412">
    <property type="term" value="P:translation"/>
    <property type="evidence" value="ECO:0007669"/>
    <property type="project" value="UniProtKB-UniRule"/>
</dbReference>
<dbReference type="CDD" id="cd05797">
    <property type="entry name" value="Ribosomal_L10"/>
    <property type="match status" value="1"/>
</dbReference>
<dbReference type="Gene3D" id="3.30.70.1730">
    <property type="match status" value="1"/>
</dbReference>
<dbReference type="Gene3D" id="6.10.250.290">
    <property type="match status" value="1"/>
</dbReference>
<dbReference type="HAMAP" id="MF_00362">
    <property type="entry name" value="Ribosomal_uL10"/>
    <property type="match status" value="1"/>
</dbReference>
<dbReference type="InterPro" id="IPR001790">
    <property type="entry name" value="Ribosomal_uL10"/>
</dbReference>
<dbReference type="InterPro" id="IPR043141">
    <property type="entry name" value="Ribosomal_uL10-like_sf"/>
</dbReference>
<dbReference type="InterPro" id="IPR022973">
    <property type="entry name" value="Ribosomal_uL10_bac"/>
</dbReference>
<dbReference type="InterPro" id="IPR047865">
    <property type="entry name" value="Ribosomal_uL10_bac_type"/>
</dbReference>
<dbReference type="InterPro" id="IPR002363">
    <property type="entry name" value="Ribosomal_uL10_CS_bac"/>
</dbReference>
<dbReference type="NCBIfam" id="NF000955">
    <property type="entry name" value="PRK00099.1-1"/>
    <property type="match status" value="1"/>
</dbReference>
<dbReference type="PANTHER" id="PTHR11560">
    <property type="entry name" value="39S RIBOSOMAL PROTEIN L10, MITOCHONDRIAL"/>
    <property type="match status" value="1"/>
</dbReference>
<dbReference type="Pfam" id="PF00466">
    <property type="entry name" value="Ribosomal_L10"/>
    <property type="match status" value="1"/>
</dbReference>
<dbReference type="SUPFAM" id="SSF160369">
    <property type="entry name" value="Ribosomal protein L10-like"/>
    <property type="match status" value="1"/>
</dbReference>
<dbReference type="PROSITE" id="PS01109">
    <property type="entry name" value="RIBOSOMAL_L10"/>
    <property type="match status" value="1"/>
</dbReference>
<reference key="1">
    <citation type="journal article" date="2001" name="Proc. Natl. Acad. Sci. U.S.A.">
        <title>Complete genome sequence of Caulobacter crescentus.</title>
        <authorList>
            <person name="Nierman W.C."/>
            <person name="Feldblyum T.V."/>
            <person name="Laub M.T."/>
            <person name="Paulsen I.T."/>
            <person name="Nelson K.E."/>
            <person name="Eisen J.A."/>
            <person name="Heidelberg J.F."/>
            <person name="Alley M.R.K."/>
            <person name="Ohta N."/>
            <person name="Maddock J.R."/>
            <person name="Potocka I."/>
            <person name="Nelson W.C."/>
            <person name="Newton A."/>
            <person name="Stephens C."/>
            <person name="Phadke N.D."/>
            <person name="Ely B."/>
            <person name="DeBoy R.T."/>
            <person name="Dodson R.J."/>
            <person name="Durkin A.S."/>
            <person name="Gwinn M.L."/>
            <person name="Haft D.H."/>
            <person name="Kolonay J.F."/>
            <person name="Smit J."/>
            <person name="Craven M.B."/>
            <person name="Khouri H.M."/>
            <person name="Shetty J."/>
            <person name="Berry K.J."/>
            <person name="Utterback T.R."/>
            <person name="Tran K."/>
            <person name="Wolf A.M."/>
            <person name="Vamathevan J.J."/>
            <person name="Ermolaeva M.D."/>
            <person name="White O."/>
            <person name="Salzberg S.L."/>
            <person name="Venter J.C."/>
            <person name="Shapiro L."/>
            <person name="Fraser C.M."/>
        </authorList>
    </citation>
    <scope>NUCLEOTIDE SEQUENCE [LARGE SCALE GENOMIC DNA]</scope>
    <source>
        <strain>ATCC 19089 / CIP 103742 / CB 15</strain>
    </source>
</reference>
<evidence type="ECO:0000250" key="1"/>
<evidence type="ECO:0000305" key="2"/>
<sequence length="172" mass="18039">MDRAQKQESIESLKSVFADAGAVVVTHYMGLTVAEMTDLRLRLRKEGAAIKVVKNTLALKALDGKLGDKGDKLFTGPVAIAYGPDAVSAAKIAVQFAKENDKLKIVGGVLDQTNVLDEAGVRALATLPSLDELRGKLIGLIQAPATKIAGVLQAPAAQLARVFNAYATKDAA</sequence>
<gene>
    <name type="primary">rplJ</name>
    <name type="ordered locus">CC_0496</name>
</gene>
<protein>
    <recommendedName>
        <fullName evidence="2">Large ribosomal subunit protein uL10</fullName>
    </recommendedName>
    <alternativeName>
        <fullName>50S ribosomal protein L10</fullName>
    </alternativeName>
</protein>
<organism>
    <name type="scientific">Caulobacter vibrioides (strain ATCC 19089 / CIP 103742 / CB 15)</name>
    <name type="common">Caulobacter crescentus</name>
    <dbReference type="NCBI Taxonomy" id="190650"/>
    <lineage>
        <taxon>Bacteria</taxon>
        <taxon>Pseudomonadati</taxon>
        <taxon>Pseudomonadota</taxon>
        <taxon>Alphaproteobacteria</taxon>
        <taxon>Caulobacterales</taxon>
        <taxon>Caulobacteraceae</taxon>
        <taxon>Caulobacter</taxon>
    </lineage>
</organism>